<sequence>MAMTLPYLIQAKQQGRPLVALTAWDYAIAQLLDGAGVDIILVGDSLAMVALGHRTTLPITLDEMIHHAKAVCRGVKQSLVVCDLPFLSYQESISQAIRSAGRVLKETGAQGVKLEGGHAVAVETVQQLTSIGIPVMGHVGLTPQSVHRLGYRQQGQTEIDAERIISEAIALENAGVFALVLEHIPINLAATITSKLSIPTIGIGAGPHCDGQVLVTADLLGLSKKQPPFAKSYLNLRGLITEAVNEFSREVREGEFP</sequence>
<dbReference type="EC" id="2.1.2.11" evidence="1"/>
<dbReference type="EMBL" id="CP001287">
    <property type="protein sequence ID" value="ACK68292.1"/>
    <property type="molecule type" value="Genomic_DNA"/>
</dbReference>
<dbReference type="RefSeq" id="WP_015785347.1">
    <property type="nucleotide sequence ID" value="NC_011726.1"/>
</dbReference>
<dbReference type="SMR" id="B7JVF9"/>
<dbReference type="STRING" id="41431.PCC8801_4370"/>
<dbReference type="KEGG" id="cyp:PCC8801_4370"/>
<dbReference type="eggNOG" id="COG0413">
    <property type="taxonomic scope" value="Bacteria"/>
</dbReference>
<dbReference type="HOGENOM" id="CLU_036645_1_0_3"/>
<dbReference type="OrthoDB" id="9781789at2"/>
<dbReference type="UniPathway" id="UPA00028">
    <property type="reaction ID" value="UER00003"/>
</dbReference>
<dbReference type="Proteomes" id="UP000008204">
    <property type="component" value="Chromosome"/>
</dbReference>
<dbReference type="GO" id="GO:0005737">
    <property type="term" value="C:cytoplasm"/>
    <property type="evidence" value="ECO:0007669"/>
    <property type="project" value="UniProtKB-SubCell"/>
</dbReference>
<dbReference type="GO" id="GO:0003864">
    <property type="term" value="F:3-methyl-2-oxobutanoate hydroxymethyltransferase activity"/>
    <property type="evidence" value="ECO:0007669"/>
    <property type="project" value="UniProtKB-UniRule"/>
</dbReference>
<dbReference type="GO" id="GO:0000287">
    <property type="term" value="F:magnesium ion binding"/>
    <property type="evidence" value="ECO:0007669"/>
    <property type="project" value="TreeGrafter"/>
</dbReference>
<dbReference type="GO" id="GO:0015940">
    <property type="term" value="P:pantothenate biosynthetic process"/>
    <property type="evidence" value="ECO:0007669"/>
    <property type="project" value="UniProtKB-UniRule"/>
</dbReference>
<dbReference type="CDD" id="cd06557">
    <property type="entry name" value="KPHMT-like"/>
    <property type="match status" value="1"/>
</dbReference>
<dbReference type="FunFam" id="3.20.20.60:FF:000003">
    <property type="entry name" value="3-methyl-2-oxobutanoate hydroxymethyltransferase"/>
    <property type="match status" value="1"/>
</dbReference>
<dbReference type="Gene3D" id="3.20.20.60">
    <property type="entry name" value="Phosphoenolpyruvate-binding domains"/>
    <property type="match status" value="1"/>
</dbReference>
<dbReference type="HAMAP" id="MF_00156">
    <property type="entry name" value="PanB"/>
    <property type="match status" value="1"/>
</dbReference>
<dbReference type="InterPro" id="IPR003700">
    <property type="entry name" value="Pantoate_hydroxy_MeTrfase"/>
</dbReference>
<dbReference type="InterPro" id="IPR015813">
    <property type="entry name" value="Pyrv/PenolPyrv_kinase-like_dom"/>
</dbReference>
<dbReference type="InterPro" id="IPR040442">
    <property type="entry name" value="Pyrv_kinase-like_dom_sf"/>
</dbReference>
<dbReference type="NCBIfam" id="TIGR00222">
    <property type="entry name" value="panB"/>
    <property type="match status" value="1"/>
</dbReference>
<dbReference type="NCBIfam" id="NF001452">
    <property type="entry name" value="PRK00311.1"/>
    <property type="match status" value="1"/>
</dbReference>
<dbReference type="PANTHER" id="PTHR20881">
    <property type="entry name" value="3-METHYL-2-OXOBUTANOATE HYDROXYMETHYLTRANSFERASE"/>
    <property type="match status" value="1"/>
</dbReference>
<dbReference type="PANTHER" id="PTHR20881:SF0">
    <property type="entry name" value="3-METHYL-2-OXOBUTANOATE HYDROXYMETHYLTRANSFERASE"/>
    <property type="match status" value="1"/>
</dbReference>
<dbReference type="Pfam" id="PF02548">
    <property type="entry name" value="Pantoate_transf"/>
    <property type="match status" value="1"/>
</dbReference>
<dbReference type="PIRSF" id="PIRSF000388">
    <property type="entry name" value="Pantoate_hydroxy_MeTrfase"/>
    <property type="match status" value="1"/>
</dbReference>
<dbReference type="SUPFAM" id="SSF51621">
    <property type="entry name" value="Phosphoenolpyruvate/pyruvate domain"/>
    <property type="match status" value="1"/>
</dbReference>
<proteinExistence type="inferred from homology"/>
<protein>
    <recommendedName>
        <fullName evidence="1">3-methyl-2-oxobutanoate hydroxymethyltransferase</fullName>
        <ecNumber evidence="1">2.1.2.11</ecNumber>
    </recommendedName>
    <alternativeName>
        <fullName evidence="1">Ketopantoate hydroxymethyltransferase</fullName>
        <shortName evidence="1">KPHMT</shortName>
    </alternativeName>
</protein>
<comment type="function">
    <text evidence="1">Catalyzes the reversible reaction in which hydroxymethyl group from 5,10-methylenetetrahydrofolate is transferred onto alpha-ketoisovalerate to form ketopantoate.</text>
</comment>
<comment type="catalytic activity">
    <reaction evidence="1">
        <text>3-methyl-2-oxobutanoate + (6R)-5,10-methylene-5,6,7,8-tetrahydrofolate + H2O = 2-dehydropantoate + (6S)-5,6,7,8-tetrahydrofolate</text>
        <dbReference type="Rhea" id="RHEA:11824"/>
        <dbReference type="ChEBI" id="CHEBI:11561"/>
        <dbReference type="ChEBI" id="CHEBI:11851"/>
        <dbReference type="ChEBI" id="CHEBI:15377"/>
        <dbReference type="ChEBI" id="CHEBI:15636"/>
        <dbReference type="ChEBI" id="CHEBI:57453"/>
        <dbReference type="EC" id="2.1.2.11"/>
    </reaction>
</comment>
<comment type="cofactor">
    <cofactor evidence="1">
        <name>Mg(2+)</name>
        <dbReference type="ChEBI" id="CHEBI:18420"/>
    </cofactor>
    <text evidence="1">Binds 1 Mg(2+) ion per subunit.</text>
</comment>
<comment type="pathway">
    <text evidence="1">Cofactor biosynthesis; (R)-pantothenate biosynthesis; (R)-pantoate from 3-methyl-2-oxobutanoate: step 1/2.</text>
</comment>
<comment type="subunit">
    <text evidence="1">Homodecamer; pentamer of dimers.</text>
</comment>
<comment type="subcellular location">
    <subcellularLocation>
        <location evidence="1">Cytoplasm</location>
    </subcellularLocation>
</comment>
<comment type="similarity">
    <text evidence="1">Belongs to the PanB family.</text>
</comment>
<organism>
    <name type="scientific">Rippkaea orientalis (strain PCC 8801 / RF-1)</name>
    <name type="common">Cyanothece sp. (strain PCC 8801)</name>
    <dbReference type="NCBI Taxonomy" id="41431"/>
    <lineage>
        <taxon>Bacteria</taxon>
        <taxon>Bacillati</taxon>
        <taxon>Cyanobacteriota</taxon>
        <taxon>Cyanophyceae</taxon>
        <taxon>Oscillatoriophycideae</taxon>
        <taxon>Chroococcales</taxon>
        <taxon>Aphanothecaceae</taxon>
        <taxon>Rippkaea</taxon>
        <taxon>Rippkaea orientalis</taxon>
    </lineage>
</organism>
<keyword id="KW-0963">Cytoplasm</keyword>
<keyword id="KW-0460">Magnesium</keyword>
<keyword id="KW-0479">Metal-binding</keyword>
<keyword id="KW-0566">Pantothenate biosynthesis</keyword>
<keyword id="KW-1185">Reference proteome</keyword>
<keyword id="KW-0808">Transferase</keyword>
<reference key="1">
    <citation type="journal article" date="2011" name="MBio">
        <title>Novel metabolic attributes of the genus Cyanothece, comprising a group of unicellular nitrogen-fixing Cyanobacteria.</title>
        <authorList>
            <person name="Bandyopadhyay A."/>
            <person name="Elvitigala T."/>
            <person name="Welsh E."/>
            <person name="Stockel J."/>
            <person name="Liberton M."/>
            <person name="Min H."/>
            <person name="Sherman L.A."/>
            <person name="Pakrasi H.B."/>
        </authorList>
    </citation>
    <scope>NUCLEOTIDE SEQUENCE [LARGE SCALE GENOMIC DNA]</scope>
    <source>
        <strain>PCC 8801 / RF-1</strain>
    </source>
</reference>
<gene>
    <name evidence="1" type="primary">panB</name>
    <name type="ordered locus">PCC8801_4370</name>
</gene>
<accession>B7JVF9</accession>
<name>PANB_RIPO1</name>
<evidence type="ECO:0000255" key="1">
    <source>
        <dbReference type="HAMAP-Rule" id="MF_00156"/>
    </source>
</evidence>
<feature type="chain" id="PRO_1000118120" description="3-methyl-2-oxobutanoate hydroxymethyltransferase">
    <location>
        <begin position="1"/>
        <end position="257"/>
    </location>
</feature>
<feature type="active site" description="Proton acceptor" evidence="1">
    <location>
        <position position="182"/>
    </location>
</feature>
<feature type="binding site" evidence="1">
    <location>
        <begin position="44"/>
        <end position="45"/>
    </location>
    <ligand>
        <name>3-methyl-2-oxobutanoate</name>
        <dbReference type="ChEBI" id="CHEBI:11851"/>
    </ligand>
</feature>
<feature type="binding site" evidence="1">
    <location>
        <position position="44"/>
    </location>
    <ligand>
        <name>Mg(2+)</name>
        <dbReference type="ChEBI" id="CHEBI:18420"/>
    </ligand>
</feature>
<feature type="binding site" evidence="1">
    <location>
        <position position="83"/>
    </location>
    <ligand>
        <name>3-methyl-2-oxobutanoate</name>
        <dbReference type="ChEBI" id="CHEBI:11851"/>
    </ligand>
</feature>
<feature type="binding site" evidence="1">
    <location>
        <position position="83"/>
    </location>
    <ligand>
        <name>Mg(2+)</name>
        <dbReference type="ChEBI" id="CHEBI:18420"/>
    </ligand>
</feature>
<feature type="binding site" evidence="1">
    <location>
        <position position="113"/>
    </location>
    <ligand>
        <name>3-methyl-2-oxobutanoate</name>
        <dbReference type="ChEBI" id="CHEBI:11851"/>
    </ligand>
</feature>
<feature type="binding site" evidence="1">
    <location>
        <position position="115"/>
    </location>
    <ligand>
        <name>Mg(2+)</name>
        <dbReference type="ChEBI" id="CHEBI:18420"/>
    </ligand>
</feature>